<proteinExistence type="inferred from homology"/>
<accession>Q03475</accession>
<protein>
    <recommendedName>
        <fullName>Lateral flagellar hook-associated protein 2</fullName>
        <shortName>HAP2</shortName>
    </recommendedName>
    <alternativeName>
        <fullName>Filament CAP protein</fullName>
    </alternativeName>
    <alternativeName>
        <fullName>Flagellar cap protein</fullName>
    </alternativeName>
</protein>
<keyword id="KW-0975">Bacterial flagellum</keyword>
<keyword id="KW-0175">Coiled coil</keyword>
<keyword id="KW-0964">Secreted</keyword>
<evidence type="ECO:0000250" key="1"/>
<evidence type="ECO:0000255" key="2"/>
<evidence type="ECO:0000305" key="3"/>
<feature type="chain" id="PRO_0000177029" description="Lateral flagellar hook-associated protein 2">
    <location>
        <begin position="1"/>
        <end position="445"/>
    </location>
</feature>
<feature type="coiled-coil region" evidence="2">
    <location>
        <begin position="388"/>
        <end position="423"/>
    </location>
</feature>
<feature type="sequence conflict" description="In Ref. 1; AAA27530/AAB07351." evidence="3" ref="1">
    <original>K</original>
    <variation>N</variation>
    <location>
        <position position="226"/>
    </location>
</feature>
<name>FLIDL_VIBPA</name>
<comment type="function">
    <text>Required for the morphogenesis and for the elongation of the flagellar filament by facilitating polymerization of the flagellin monomers at the tip of growing filament. Forms a capping structure, which prevents flagellin subunits (transported through the central channel of the flagellum) from leaking out without polymerization at the distal end. Essential for swarming motility.</text>
</comment>
<comment type="subunit">
    <text evidence="1">Homopentamer.</text>
</comment>
<comment type="subcellular location">
    <subcellularLocation>
        <location>Secreted</location>
    </subcellularLocation>
    <subcellularLocation>
        <location>Bacterial flagellum</location>
    </subcellularLocation>
</comment>
<comment type="miscellaneous">
    <text>V.parahaemolyticus possesses two flagellar systems: a single polar flagellum propels the bacterium in liquid (swimming), while multiple lateral (peritrichous) flagella move the bacterium over surfaces (swarming). The polar flagellum is synthesized constitutively but lateral flagella are produced only under conditions in which the polar flagellum is not functional.</text>
</comment>
<comment type="similarity">
    <text evidence="3">Belongs to the FliD family.</text>
</comment>
<reference key="1">
    <citation type="journal article" date="1993" name="J. Bacteriol.">
        <title>Identification of genes encoding components of the swarmer cell flagellar motor and propeller and a sigma factor controlling differentiation of Vibrio parahaemolyticus.</title>
        <authorList>
            <person name="McCarter L.L."/>
            <person name="Wright M.E."/>
        </authorList>
    </citation>
    <scope>NUCLEOTIDE SEQUENCE [GENOMIC DNA]</scope>
    <source>
        <strain>BB22</strain>
    </source>
</reference>
<reference key="2">
    <citation type="journal article" date="2003" name="Lancet">
        <title>Genome sequence of Vibrio parahaemolyticus: a pathogenic mechanism distinct from that of V. cholerae.</title>
        <authorList>
            <person name="Makino K."/>
            <person name="Oshima K."/>
            <person name="Kurokawa K."/>
            <person name="Yokoyama K."/>
            <person name="Uda T."/>
            <person name="Tagomori K."/>
            <person name="Iijima Y."/>
            <person name="Najima M."/>
            <person name="Nakano M."/>
            <person name="Yamashita A."/>
            <person name="Kubota Y."/>
            <person name="Kimura S."/>
            <person name="Yasunaga T."/>
            <person name="Honda T."/>
            <person name="Shinagawa H."/>
            <person name="Hattori M."/>
            <person name="Iida T."/>
        </authorList>
    </citation>
    <scope>NUCLEOTIDE SEQUENCE [LARGE SCALE GENOMIC DNA]</scope>
    <source>
        <strain>RIMD 2210633</strain>
    </source>
</reference>
<organism>
    <name type="scientific">Vibrio parahaemolyticus serotype O3:K6 (strain RIMD 2210633)</name>
    <dbReference type="NCBI Taxonomy" id="223926"/>
    <lineage>
        <taxon>Bacteria</taxon>
        <taxon>Pseudomonadati</taxon>
        <taxon>Pseudomonadota</taxon>
        <taxon>Gammaproteobacteria</taxon>
        <taxon>Vibrionales</taxon>
        <taxon>Vibrionaceae</taxon>
        <taxon>Vibrio</taxon>
    </lineage>
</organism>
<gene>
    <name type="primary">fliDL</name>
    <name type="synonym">lafB</name>
    <name type="ordered locus">VPA1550</name>
</gene>
<dbReference type="EMBL" id="L06176">
    <property type="protein sequence ID" value="AAA27530.1"/>
    <property type="molecule type" value="Genomic_DNA"/>
</dbReference>
<dbReference type="EMBL" id="U52957">
    <property type="protein sequence ID" value="AAB07351.1"/>
    <property type="molecule type" value="Genomic_DNA"/>
</dbReference>
<dbReference type="EMBL" id="BA000032">
    <property type="protein sequence ID" value="BAC62893.1"/>
    <property type="molecule type" value="Genomic_DNA"/>
</dbReference>
<dbReference type="PIR" id="B40590">
    <property type="entry name" value="B40590"/>
</dbReference>
<dbReference type="RefSeq" id="NP_801060.1">
    <property type="nucleotide sequence ID" value="NC_004605.1"/>
</dbReference>
<dbReference type="SMR" id="Q03475"/>
<dbReference type="GeneID" id="1192246"/>
<dbReference type="KEGG" id="vpa:VPA1550"/>
<dbReference type="PATRIC" id="fig|223926.6.peg.4472"/>
<dbReference type="eggNOG" id="COG1345">
    <property type="taxonomic scope" value="Bacteria"/>
</dbReference>
<dbReference type="HOGENOM" id="CLU_015182_7_0_6"/>
<dbReference type="Proteomes" id="UP000002493">
    <property type="component" value="Chromosome 2"/>
</dbReference>
<dbReference type="GO" id="GO:0009421">
    <property type="term" value="C:bacterial-type flagellum filament cap"/>
    <property type="evidence" value="ECO:0007669"/>
    <property type="project" value="InterPro"/>
</dbReference>
<dbReference type="GO" id="GO:0009424">
    <property type="term" value="C:bacterial-type flagellum hook"/>
    <property type="evidence" value="ECO:0007669"/>
    <property type="project" value="InterPro"/>
</dbReference>
<dbReference type="GO" id="GO:0005576">
    <property type="term" value="C:extracellular region"/>
    <property type="evidence" value="ECO:0007669"/>
    <property type="project" value="UniProtKB-SubCell"/>
</dbReference>
<dbReference type="GO" id="GO:0071973">
    <property type="term" value="P:bacterial-type flagellum-dependent cell motility"/>
    <property type="evidence" value="ECO:0007669"/>
    <property type="project" value="TreeGrafter"/>
</dbReference>
<dbReference type="GO" id="GO:0007155">
    <property type="term" value="P:cell adhesion"/>
    <property type="evidence" value="ECO:0007669"/>
    <property type="project" value="InterPro"/>
</dbReference>
<dbReference type="Gene3D" id="3.30.70.2120">
    <property type="match status" value="1"/>
</dbReference>
<dbReference type="InterPro" id="IPR010810">
    <property type="entry name" value="Flagellin_hook_IN_motif"/>
</dbReference>
<dbReference type="InterPro" id="IPR040026">
    <property type="entry name" value="FliD"/>
</dbReference>
<dbReference type="InterPro" id="IPR010809">
    <property type="entry name" value="FliD_C"/>
</dbReference>
<dbReference type="InterPro" id="IPR003481">
    <property type="entry name" value="FliD_N"/>
</dbReference>
<dbReference type="PANTHER" id="PTHR30288">
    <property type="entry name" value="FLAGELLAR CAP/ASSEMBLY PROTEIN FLID"/>
    <property type="match status" value="1"/>
</dbReference>
<dbReference type="PANTHER" id="PTHR30288:SF0">
    <property type="entry name" value="FLAGELLAR HOOK-ASSOCIATED PROTEIN 2"/>
    <property type="match status" value="1"/>
</dbReference>
<dbReference type="Pfam" id="PF07196">
    <property type="entry name" value="Flagellin_IN"/>
    <property type="match status" value="1"/>
</dbReference>
<dbReference type="Pfam" id="PF07195">
    <property type="entry name" value="FliD_C"/>
    <property type="match status" value="1"/>
</dbReference>
<dbReference type="Pfam" id="PF02465">
    <property type="entry name" value="FliD_N"/>
    <property type="match status" value="1"/>
</dbReference>
<sequence length="445" mass="48279">MSSIDPATFAAQFAQIEIQPFKQRYQLQTNTYQSQLSALGKVESAMREFRTALNEMNSSTNSIIKNSTSISQEGYFTANADAKALSGSYQIFVEQVATSHQVSTGMPADLDATTEIPKTGNLEFTINGKTMTIDLSTVDTDGDGVTTVSDLTKAINNNSDNPGVNATLVRSNGQTHFMLSSTETGVANQINVSATGTGQAWFEDAFTNLSQISAPQDAVIWLGAEKTGLKLTNSSNTFEGVIDGVDITVTKAQTSGETAIGLGIGADDEATKEQLNKFVDAYNTLISTIDEHTQIGSEDKKRGVLASDPTMRSIESQLSSLVRGEHGGMRLSEIGVTLDRHGKLKVDQEKFAEAQKNNSAGLEAMFNGDGALLDSMDAMAEPFLKFSSGAFKSRKEALQANLDRLSDKQTTLERKYDMSYKRYLKQFTQMNTLMTQMNQTMSMFG</sequence>